<name>RNPA_LEUCK</name>
<protein>
    <recommendedName>
        <fullName evidence="1">Ribonuclease P protein component</fullName>
        <shortName evidence="1">RNase P protein</shortName>
        <shortName evidence="1">RNaseP protein</shortName>
        <ecNumber evidence="1">3.1.26.5</ecNumber>
    </recommendedName>
    <alternativeName>
        <fullName evidence="1">Protein C5</fullName>
    </alternativeName>
</protein>
<accession>B1MWS3</accession>
<reference key="1">
    <citation type="journal article" date="2008" name="J. Bacteriol.">
        <title>Complete genome sequence of Leuconostoc citreum KM20.</title>
        <authorList>
            <person name="Kim J.F."/>
            <person name="Jeong H."/>
            <person name="Lee J.-S."/>
            <person name="Choi S.-H."/>
            <person name="Ha M."/>
            <person name="Hur C.-G."/>
            <person name="Kim J.-S."/>
            <person name="Lee S."/>
            <person name="Park H.-S."/>
            <person name="Park Y.-H."/>
            <person name="Oh T.K."/>
        </authorList>
    </citation>
    <scope>NUCLEOTIDE SEQUENCE [LARGE SCALE GENOMIC DNA]</scope>
    <source>
        <strain>KM20</strain>
    </source>
</reference>
<dbReference type="EC" id="3.1.26.5" evidence="1"/>
<dbReference type="EMBL" id="DQ489736">
    <property type="protein sequence ID" value="ACA83532.1"/>
    <property type="molecule type" value="Genomic_DNA"/>
</dbReference>
<dbReference type="RefSeq" id="WP_004902207.1">
    <property type="nucleotide sequence ID" value="NC_010471.1"/>
</dbReference>
<dbReference type="SMR" id="B1MWS3"/>
<dbReference type="STRING" id="349519.LCK_01710"/>
<dbReference type="GeneID" id="61103088"/>
<dbReference type="KEGG" id="lci:LCK_01710"/>
<dbReference type="eggNOG" id="COG0594">
    <property type="taxonomic scope" value="Bacteria"/>
</dbReference>
<dbReference type="HOGENOM" id="CLU_117179_9_1_9"/>
<dbReference type="OrthoDB" id="9810867at2"/>
<dbReference type="Proteomes" id="UP000002166">
    <property type="component" value="Chromosome"/>
</dbReference>
<dbReference type="GO" id="GO:0030677">
    <property type="term" value="C:ribonuclease P complex"/>
    <property type="evidence" value="ECO:0007669"/>
    <property type="project" value="TreeGrafter"/>
</dbReference>
<dbReference type="GO" id="GO:0042781">
    <property type="term" value="F:3'-tRNA processing endoribonuclease activity"/>
    <property type="evidence" value="ECO:0007669"/>
    <property type="project" value="TreeGrafter"/>
</dbReference>
<dbReference type="GO" id="GO:0004526">
    <property type="term" value="F:ribonuclease P activity"/>
    <property type="evidence" value="ECO:0007669"/>
    <property type="project" value="UniProtKB-UniRule"/>
</dbReference>
<dbReference type="GO" id="GO:0000049">
    <property type="term" value="F:tRNA binding"/>
    <property type="evidence" value="ECO:0007669"/>
    <property type="project" value="UniProtKB-UniRule"/>
</dbReference>
<dbReference type="GO" id="GO:0001682">
    <property type="term" value="P:tRNA 5'-leader removal"/>
    <property type="evidence" value="ECO:0007669"/>
    <property type="project" value="UniProtKB-UniRule"/>
</dbReference>
<dbReference type="Gene3D" id="3.30.230.10">
    <property type="match status" value="1"/>
</dbReference>
<dbReference type="HAMAP" id="MF_00227">
    <property type="entry name" value="RNase_P"/>
    <property type="match status" value="1"/>
</dbReference>
<dbReference type="InterPro" id="IPR020568">
    <property type="entry name" value="Ribosomal_Su5_D2-typ_SF"/>
</dbReference>
<dbReference type="InterPro" id="IPR014721">
    <property type="entry name" value="Ribsml_uS5_D2-typ_fold_subgr"/>
</dbReference>
<dbReference type="InterPro" id="IPR000100">
    <property type="entry name" value="RNase_P"/>
</dbReference>
<dbReference type="NCBIfam" id="TIGR00188">
    <property type="entry name" value="rnpA"/>
    <property type="match status" value="1"/>
</dbReference>
<dbReference type="PANTHER" id="PTHR33992">
    <property type="entry name" value="RIBONUCLEASE P PROTEIN COMPONENT"/>
    <property type="match status" value="1"/>
</dbReference>
<dbReference type="PANTHER" id="PTHR33992:SF1">
    <property type="entry name" value="RIBONUCLEASE P PROTEIN COMPONENT"/>
    <property type="match status" value="1"/>
</dbReference>
<dbReference type="Pfam" id="PF00825">
    <property type="entry name" value="Ribonuclease_P"/>
    <property type="match status" value="1"/>
</dbReference>
<dbReference type="SUPFAM" id="SSF54211">
    <property type="entry name" value="Ribosomal protein S5 domain 2-like"/>
    <property type="match status" value="1"/>
</dbReference>
<sequence length="116" mass="13690">MRKTFRIKKPADFQIVFNKHQSVANKYFIVYHIDKPEQKHFRLGLSVSKKVGKAHDRVWVKRRIRQSILELKSDLPHDIDLLVIARPAVAKQSQKFIKEQIIHVLKLADILKVEDK</sequence>
<proteinExistence type="inferred from homology"/>
<gene>
    <name evidence="1" type="primary">rnpA</name>
    <name type="ordered locus">LCK_01710</name>
</gene>
<keyword id="KW-0255">Endonuclease</keyword>
<keyword id="KW-0378">Hydrolase</keyword>
<keyword id="KW-0540">Nuclease</keyword>
<keyword id="KW-1185">Reference proteome</keyword>
<keyword id="KW-0694">RNA-binding</keyword>
<keyword id="KW-0819">tRNA processing</keyword>
<comment type="function">
    <text evidence="1">RNaseP catalyzes the removal of the 5'-leader sequence from pre-tRNA to produce the mature 5'-terminus. It can also cleave other RNA substrates such as 4.5S RNA. The protein component plays an auxiliary but essential role in vivo by binding to the 5'-leader sequence and broadening the substrate specificity of the ribozyme.</text>
</comment>
<comment type="catalytic activity">
    <reaction evidence="1">
        <text>Endonucleolytic cleavage of RNA, removing 5'-extranucleotides from tRNA precursor.</text>
        <dbReference type="EC" id="3.1.26.5"/>
    </reaction>
</comment>
<comment type="subunit">
    <text evidence="1">Consists of a catalytic RNA component (M1 or rnpB) and a protein subunit.</text>
</comment>
<comment type="similarity">
    <text evidence="1">Belongs to the RnpA family.</text>
</comment>
<organism>
    <name type="scientific">Leuconostoc citreum (strain KM20)</name>
    <dbReference type="NCBI Taxonomy" id="349519"/>
    <lineage>
        <taxon>Bacteria</taxon>
        <taxon>Bacillati</taxon>
        <taxon>Bacillota</taxon>
        <taxon>Bacilli</taxon>
        <taxon>Lactobacillales</taxon>
        <taxon>Lactobacillaceae</taxon>
        <taxon>Leuconostoc</taxon>
    </lineage>
</organism>
<evidence type="ECO:0000255" key="1">
    <source>
        <dbReference type="HAMAP-Rule" id="MF_00227"/>
    </source>
</evidence>
<feature type="chain" id="PRO_1000100372" description="Ribonuclease P protein component">
    <location>
        <begin position="1"/>
        <end position="116"/>
    </location>
</feature>